<accession>P53290</accession>
<accession>D6VUU7</accession>
<feature type="chain" id="PRO_0000122487" description="GTP-binding protein GTR2">
    <location>
        <begin position="1"/>
        <end position="341"/>
    </location>
</feature>
<feature type="binding site" evidence="6 13">
    <location>
        <position position="23"/>
    </location>
    <ligand>
        <name>GTP</name>
        <dbReference type="ChEBI" id="CHEBI:37565"/>
    </ligand>
</feature>
<feature type="binding site" evidence="6 13">
    <location>
        <position position="24"/>
    </location>
    <ligand>
        <name>GTP</name>
        <dbReference type="ChEBI" id="CHEBI:37565"/>
    </ligand>
</feature>
<feature type="binding site" evidence="6 13">
    <location>
        <position position="43"/>
    </location>
    <ligand>
        <name>GTP</name>
        <dbReference type="ChEBI" id="CHEBI:37565"/>
    </ligand>
</feature>
<feature type="binding site" evidence="6 13">
    <location>
        <position position="124"/>
    </location>
    <ligand>
        <name>GTP</name>
        <dbReference type="ChEBI" id="CHEBI:37565"/>
    </ligand>
</feature>
<feature type="binding site" evidence="6 13">
    <location>
        <position position="127"/>
    </location>
    <ligand>
        <name>GTP</name>
        <dbReference type="ChEBI" id="CHEBI:37565"/>
    </ligand>
</feature>
<feature type="mutagenesis site" description="Sensitive to high hydrostatic pressure." evidence="9">
    <original>Q</original>
    <variation>L</variation>
    <location>
        <position position="66"/>
    </location>
</feature>
<feature type="strand" evidence="14">
    <location>
        <begin position="12"/>
        <end position="15"/>
    </location>
</feature>
<feature type="helix" evidence="14">
    <location>
        <begin position="24"/>
        <end position="30"/>
    </location>
</feature>
<feature type="helix" evidence="14">
    <location>
        <begin position="36"/>
        <end position="38"/>
    </location>
</feature>
<feature type="turn" evidence="15">
    <location>
        <begin position="42"/>
        <end position="44"/>
    </location>
</feature>
<feature type="strand" evidence="14">
    <location>
        <begin position="50"/>
        <end position="52"/>
    </location>
</feature>
<feature type="strand" evidence="14">
    <location>
        <begin position="54"/>
        <end position="56"/>
    </location>
</feature>
<feature type="strand" evidence="14">
    <location>
        <begin position="58"/>
        <end position="62"/>
    </location>
</feature>
<feature type="strand" evidence="14">
    <location>
        <begin position="67"/>
        <end position="69"/>
    </location>
</feature>
<feature type="helix" evidence="14">
    <location>
        <begin position="74"/>
        <end position="80"/>
    </location>
</feature>
<feature type="strand" evidence="14">
    <location>
        <begin position="84"/>
        <end position="89"/>
    </location>
</feature>
<feature type="helix" evidence="14">
    <location>
        <begin position="98"/>
        <end position="113"/>
    </location>
</feature>
<feature type="strand" evidence="14">
    <location>
        <begin position="118"/>
        <end position="122"/>
    </location>
</feature>
<feature type="strand" evidence="16">
    <location>
        <begin position="127"/>
        <end position="129"/>
    </location>
</feature>
<feature type="helix" evidence="14">
    <location>
        <begin position="132"/>
        <end position="147"/>
    </location>
</feature>
<feature type="strand" evidence="14">
    <location>
        <begin position="150"/>
        <end position="153"/>
    </location>
</feature>
<feature type="strand" evidence="14">
    <location>
        <begin position="159"/>
        <end position="162"/>
    </location>
</feature>
<feature type="strand" evidence="14">
    <location>
        <begin position="166"/>
        <end position="169"/>
    </location>
</feature>
<feature type="helix" evidence="14">
    <location>
        <begin position="170"/>
        <end position="179"/>
    </location>
</feature>
<feature type="helix" evidence="14">
    <location>
        <begin position="186"/>
        <end position="193"/>
    </location>
</feature>
<feature type="helix" evidence="14">
    <location>
        <begin position="195"/>
        <end position="197"/>
    </location>
</feature>
<feature type="strand" evidence="14">
    <location>
        <begin position="199"/>
        <end position="212"/>
    </location>
</feature>
<feature type="strand" evidence="14">
    <location>
        <begin position="216"/>
        <end position="218"/>
    </location>
</feature>
<feature type="helix" evidence="14">
    <location>
        <begin position="225"/>
        <end position="242"/>
    </location>
</feature>
<feature type="helix" evidence="16">
    <location>
        <begin position="249"/>
        <end position="251"/>
    </location>
</feature>
<feature type="strand" evidence="14">
    <location>
        <begin position="270"/>
        <end position="275"/>
    </location>
</feature>
<feature type="strand" evidence="14">
    <location>
        <begin position="280"/>
        <end position="285"/>
    </location>
</feature>
<feature type="strand" evidence="14">
    <location>
        <begin position="287"/>
        <end position="296"/>
    </location>
</feature>
<feature type="helix" evidence="14">
    <location>
        <begin position="303"/>
        <end position="322"/>
    </location>
</feature>
<sequence length="341" mass="38600">MSLEATDSKAMVLLMGVRRCGKSSICKVVFHNMQPLDTLYLESTSNPSLEHFSTLIDLAVMELPGQLNYFEPSYDSERLFKSVGALVYVIDSQDEYINAITNLAMIIEYAYKVNPSINIEVLIHKVDGLSEDFKVDAQRDIMQRTGEELLELGLDGVQVSFYLTSIFDHSIYEAFSRIVQKLIPELSFLENMLDNLIQHSKIEKAFLFDVNSKIYVSTDSNPVDIQMYEVCSEFIDVTIDLFDLYKAPVLRNSQKSSDKDNVINPRNELQNVSQLANGVIIYLRQMIRGLALVAIIRPNGTDMESCLTVADYNIDIFKKGLEDIWANARASQAKNSIEDDV</sequence>
<comment type="function">
    <text evidence="4 5 7 8 9">GTPase involved in activation of the TORC1 signaling pathway, which promotes growth and represses autophagy in nutrient-rich conditions (PubMed:15989961, PubMed:26510498, PubMed:28993463, PubMed:32801125). Also required for TORC1 inactivation during nitrogen starvation (PubMed:28993463). Required for intracellular sorting of GAP1 out of the endosome (PubMed:16732272). Involved in the regulation of microautophagy (PubMed:15989961).</text>
</comment>
<comment type="catalytic activity">
    <reaction evidence="1">
        <text>GTP + H2O = GDP + phosphate + H(+)</text>
        <dbReference type="Rhea" id="RHEA:19669"/>
        <dbReference type="ChEBI" id="CHEBI:15377"/>
        <dbReference type="ChEBI" id="CHEBI:15378"/>
        <dbReference type="ChEBI" id="CHEBI:37565"/>
        <dbReference type="ChEBI" id="CHEBI:43474"/>
        <dbReference type="ChEBI" id="CHEBI:58189"/>
    </reaction>
    <physiologicalReaction direction="left-to-right" evidence="1">
        <dbReference type="Rhea" id="RHEA:19670"/>
    </physiologicalReaction>
</comment>
<comment type="subunit">
    <text evidence="4 5 6">Heterodimer; with GTR1 (PubMed:21816923). Component of the GSE complex composed of GTR1, GTR2, SLM4, MEH1 and LTV1 (PubMed:16732272). Component of the EGO complex, at least composed of GTR2, SLM4 and MEH1 (PubMed:15989961). Interacts with GTR1; the interaction is direct (PubMed:21816923).</text>
</comment>
<comment type="interaction">
    <interactant intactId="EBI-7962">
        <id>P53290</id>
    </interactant>
    <interactant intactId="EBI-7954">
        <id>Q00582</id>
        <label>GTR1</label>
    </interactant>
    <organismsDiffer>false</organismsDiffer>
    <experiments>5</experiments>
</comment>
<comment type="interaction">
    <interactant intactId="EBI-7962">
        <id>P53290</id>
    </interactant>
    <interactant intactId="EBI-27062">
        <id>Q02205</id>
        <label>MEH1</label>
    </interactant>
    <organismsDiffer>false</organismsDiffer>
    <experiments>3</experiments>
</comment>
<comment type="interaction">
    <interactant intactId="EBI-7962">
        <id>P53290</id>
    </interactant>
    <interactant intactId="EBI-21507">
        <id>P38247</id>
        <label>SLM4</label>
    </interactant>
    <organismsDiffer>false</organismsDiffer>
    <experiments>3</experiments>
</comment>
<comment type="subcellular location">
    <subcellularLocation>
        <location evidence="2 4 8">Vacuole membrane</location>
        <topology evidence="12">Peripheral membrane protein</topology>
    </subcellularLocation>
</comment>
<comment type="disruption phenotype">
    <text evidence="7 8 9">Abnormal punctate localization of TOR1 (PubMed:32801125). Sensitive to high hydrostatic pressure (PubMed:32801125). Resistance to tunicamycin (endoplasmic reticulum stressor) administered together with FK506 (calcineurin inhibitor) (PubMed:26510498). Sensitive to rapamycin (TORC1 signaling-inhibitor) (PubMed:28993463). Simultaneous disruption of GTR1 results in abnormal localization of TOR1 and PIB2 to vacuoles and abnormal activation of TORC1 in nitrogen-replete conditions (glutamine or leucine nitrogen source) (PubMed:28993463).</text>
</comment>
<comment type="miscellaneous">
    <text evidence="3">Present with 2610 molecules/cell in log phase SD medium.</text>
</comment>
<comment type="similarity">
    <text evidence="12">Belongs to the GTR/RAG GTP-binding protein family.</text>
</comment>
<proteinExistence type="evidence at protein level"/>
<evidence type="ECO:0000250" key="1">
    <source>
        <dbReference type="UniProtKB" id="Q9HB90"/>
    </source>
</evidence>
<evidence type="ECO:0000269" key="2">
    <source>
    </source>
</evidence>
<evidence type="ECO:0000269" key="3">
    <source>
    </source>
</evidence>
<evidence type="ECO:0000269" key="4">
    <source>
    </source>
</evidence>
<evidence type="ECO:0000269" key="5">
    <source>
    </source>
</evidence>
<evidence type="ECO:0000269" key="6">
    <source>
    </source>
</evidence>
<evidence type="ECO:0000269" key="7">
    <source>
    </source>
</evidence>
<evidence type="ECO:0000269" key="8">
    <source>
    </source>
</evidence>
<evidence type="ECO:0000269" key="9">
    <source>
    </source>
</evidence>
<evidence type="ECO:0000303" key="10">
    <source>
    </source>
</evidence>
<evidence type="ECO:0000303" key="11">
    <source ref="1"/>
</evidence>
<evidence type="ECO:0000305" key="12"/>
<evidence type="ECO:0007744" key="13">
    <source>
        <dbReference type="PDB" id="3R7W"/>
    </source>
</evidence>
<evidence type="ECO:0007829" key="14">
    <source>
        <dbReference type="PDB" id="3R7W"/>
    </source>
</evidence>
<evidence type="ECO:0007829" key="15">
    <source>
        <dbReference type="PDB" id="4ARZ"/>
    </source>
</evidence>
<evidence type="ECO:0007829" key="16">
    <source>
        <dbReference type="PDB" id="6JWP"/>
    </source>
</evidence>
<protein>
    <recommendedName>
        <fullName evidence="11">GTP-binding protein GTR2</fullName>
        <ecNumber evidence="1">3.6.5.-</ecNumber>
    </recommendedName>
</protein>
<reference key="1">
    <citation type="submission" date="1998-06" db="EMBL/GenBank/DDBJ databases">
        <title>Gtr1p and Gtr2p comprise a novel small GTPase subfamily.</title>
        <authorList>
            <person name="Nakashima N."/>
        </authorList>
    </citation>
    <scope>NUCLEOTIDE SEQUENCE [GENOMIC DNA]</scope>
</reference>
<reference key="2">
    <citation type="journal article" date="1997" name="Yeast">
        <title>Sequence analysis of 203 kilobases from Saccharomyces cerevisiae chromosome VII.</title>
        <authorList>
            <person name="Rieger M."/>
            <person name="Brueckner M."/>
            <person name="Schaefer M."/>
            <person name="Mueller-Auer S."/>
        </authorList>
    </citation>
    <scope>NUCLEOTIDE SEQUENCE [GENOMIC DNA]</scope>
    <source>
        <strain>ATCC 204508 / S288c</strain>
    </source>
</reference>
<reference key="3">
    <citation type="journal article" date="1997" name="Nature">
        <title>The nucleotide sequence of Saccharomyces cerevisiae chromosome VII.</title>
        <authorList>
            <person name="Tettelin H."/>
            <person name="Agostoni-Carbone M.L."/>
            <person name="Albermann K."/>
            <person name="Albers M."/>
            <person name="Arroyo J."/>
            <person name="Backes U."/>
            <person name="Barreiros T."/>
            <person name="Bertani I."/>
            <person name="Bjourson A.J."/>
            <person name="Brueckner M."/>
            <person name="Bruschi C.V."/>
            <person name="Carignani G."/>
            <person name="Castagnoli L."/>
            <person name="Cerdan E."/>
            <person name="Clemente M.L."/>
            <person name="Coblenz A."/>
            <person name="Coglievina M."/>
            <person name="Coissac E."/>
            <person name="Defoor E."/>
            <person name="Del Bino S."/>
            <person name="Delius H."/>
            <person name="Delneri D."/>
            <person name="de Wergifosse P."/>
            <person name="Dujon B."/>
            <person name="Durand P."/>
            <person name="Entian K.-D."/>
            <person name="Eraso P."/>
            <person name="Escribano V."/>
            <person name="Fabiani L."/>
            <person name="Fartmann B."/>
            <person name="Feroli F."/>
            <person name="Feuermann M."/>
            <person name="Frontali L."/>
            <person name="Garcia-Gonzalez M."/>
            <person name="Garcia-Saez M.I."/>
            <person name="Goffeau A."/>
            <person name="Guerreiro P."/>
            <person name="Hani J."/>
            <person name="Hansen M."/>
            <person name="Hebling U."/>
            <person name="Hernandez K."/>
            <person name="Heumann K."/>
            <person name="Hilger F."/>
            <person name="Hofmann B."/>
            <person name="Indge K.J."/>
            <person name="James C.M."/>
            <person name="Klima R."/>
            <person name="Koetter P."/>
            <person name="Kramer B."/>
            <person name="Kramer W."/>
            <person name="Lauquin G."/>
            <person name="Leuther H."/>
            <person name="Louis E.J."/>
            <person name="Maillier E."/>
            <person name="Marconi A."/>
            <person name="Martegani E."/>
            <person name="Mazon M.J."/>
            <person name="Mazzoni C."/>
            <person name="McReynolds A.D.K."/>
            <person name="Melchioretto P."/>
            <person name="Mewes H.-W."/>
            <person name="Minenkova O."/>
            <person name="Mueller-Auer S."/>
            <person name="Nawrocki A."/>
            <person name="Netter P."/>
            <person name="Neu R."/>
            <person name="Nombela C."/>
            <person name="Oliver S.G."/>
            <person name="Panzeri L."/>
            <person name="Paoluzi S."/>
            <person name="Plevani P."/>
            <person name="Portetelle D."/>
            <person name="Portillo F."/>
            <person name="Potier S."/>
            <person name="Purnelle B."/>
            <person name="Rieger M."/>
            <person name="Riles L."/>
            <person name="Rinaldi T."/>
            <person name="Robben J."/>
            <person name="Rodrigues-Pousada C."/>
            <person name="Rodriguez-Belmonte E."/>
            <person name="Rodriguez-Torres A.M."/>
            <person name="Rose M."/>
            <person name="Ruzzi M."/>
            <person name="Saliola M."/>
            <person name="Sanchez-Perez M."/>
            <person name="Schaefer B."/>
            <person name="Schaefer M."/>
            <person name="Scharfe M."/>
            <person name="Schmidheini T."/>
            <person name="Schreer A."/>
            <person name="Skala J."/>
            <person name="Souciet J.-L."/>
            <person name="Steensma H.Y."/>
            <person name="Talla E."/>
            <person name="Thierry A."/>
            <person name="Vandenbol M."/>
            <person name="van der Aart Q.J.M."/>
            <person name="Van Dyck L."/>
            <person name="Vanoni M."/>
            <person name="Verhasselt P."/>
            <person name="Voet M."/>
            <person name="Volckaert G."/>
            <person name="Wambutt R."/>
            <person name="Watson M.D."/>
            <person name="Weber N."/>
            <person name="Wedler E."/>
            <person name="Wedler H."/>
            <person name="Wipfli P."/>
            <person name="Wolf K."/>
            <person name="Wright L.F."/>
            <person name="Zaccaria P."/>
            <person name="Zimmermann M."/>
            <person name="Zollner A."/>
            <person name="Kleine K."/>
        </authorList>
    </citation>
    <scope>NUCLEOTIDE SEQUENCE [LARGE SCALE GENOMIC DNA]</scope>
    <source>
        <strain>ATCC 204508 / S288c</strain>
    </source>
</reference>
<reference key="4">
    <citation type="journal article" date="2014" name="G3 (Bethesda)">
        <title>The reference genome sequence of Saccharomyces cerevisiae: Then and now.</title>
        <authorList>
            <person name="Engel S.R."/>
            <person name="Dietrich F.S."/>
            <person name="Fisk D.G."/>
            <person name="Binkley G."/>
            <person name="Balakrishnan R."/>
            <person name="Costanzo M.C."/>
            <person name="Dwight S.S."/>
            <person name="Hitz B.C."/>
            <person name="Karra K."/>
            <person name="Nash R.S."/>
            <person name="Weng S."/>
            <person name="Wong E.D."/>
            <person name="Lloyd P."/>
            <person name="Skrzypek M.S."/>
            <person name="Miyasato S.R."/>
            <person name="Simison M."/>
            <person name="Cherry J.M."/>
        </authorList>
    </citation>
    <scope>GENOME REANNOTATION</scope>
    <source>
        <strain>ATCC 204508 / S288c</strain>
    </source>
</reference>
<reference key="5">
    <citation type="journal article" date="2003" name="Nature">
        <title>Global analysis of protein localization in budding yeast.</title>
        <authorList>
            <person name="Huh W.-K."/>
            <person name="Falvo J.V."/>
            <person name="Gerke L.C."/>
            <person name="Carroll A.S."/>
            <person name="Howson R.W."/>
            <person name="Weissman J.S."/>
            <person name="O'Shea E.K."/>
        </authorList>
    </citation>
    <scope>SUBCELLULAR LOCATION [LARGE SCALE ANALYSIS]</scope>
</reference>
<reference key="6">
    <citation type="journal article" date="2003" name="Nature">
        <title>Global analysis of protein expression in yeast.</title>
        <authorList>
            <person name="Ghaemmaghami S."/>
            <person name="Huh W.-K."/>
            <person name="Bower K."/>
            <person name="Howson R.W."/>
            <person name="Belle A."/>
            <person name="Dephoure N."/>
            <person name="O'Shea E.K."/>
            <person name="Weissman J.S."/>
        </authorList>
    </citation>
    <scope>LEVEL OF PROTEIN EXPRESSION [LARGE SCALE ANALYSIS]</scope>
</reference>
<reference key="7">
    <citation type="journal article" date="2005" name="Mol. Cell">
        <title>The TOR and EGO protein complexes orchestrate microautophagy in yeast.</title>
        <authorList>
            <person name="Dubouloz F."/>
            <person name="Deloche O."/>
            <person name="Wanke V."/>
            <person name="Cameroni E."/>
            <person name="De Virgilio C."/>
        </authorList>
    </citation>
    <scope>FUNCTION</scope>
    <scope>IDENTIFICATION IN THE EGO COMPLEX</scope>
    <scope>SUBCELLULAR LOCATION</scope>
</reference>
<reference key="8">
    <citation type="journal article" date="2006" name="Nat. Cell Biol.">
        <title>A conserved GTPase-containing complex is required for intracellular sorting of the general amino-acid permease in yeast.</title>
        <authorList>
            <person name="Gao M."/>
            <person name="Kaiser C.A."/>
        </authorList>
    </citation>
    <scope>FUNCTION</scope>
    <scope>IDENTIFICATION BY MASS SPECTROMETRY</scope>
    <scope>IDENTIFICATION IN THE GSE COMPLEX</scope>
</reference>
<reference key="9">
    <citation type="journal article" date="2015" name="Mol. Biol. Cell">
        <title>A LAPF/phafin1-like protein regulates TORC1 and lysosomal membrane permeabilization in response to endoplasmic reticulum membrane stress.</title>
        <authorList>
            <person name="Kim A."/>
            <person name="Cunningham K.W."/>
        </authorList>
    </citation>
    <scope>FUNCTION</scope>
    <scope>DISRUPTION PHENOTYPE</scope>
</reference>
<reference key="10">
    <citation type="journal article" date="2020" name="J. Cell Sci.">
        <title>Amino acid homeostatic control by TORC1 in Saccharomyces cerevisiae under high hydrostatic pressure.</title>
        <authorList>
            <person name="Uemura S."/>
            <person name="Mochizuki T."/>
            <person name="Amemiya K."/>
            <person name="Kurosaka G."/>
            <person name="Yazawa M."/>
            <person name="Nakamoto K."/>
            <person name="Ishikawa Y."/>
            <person name="Izawa S."/>
            <person name="Abe F."/>
        </authorList>
    </citation>
    <scope>FUNCTION</scope>
    <scope>DISRUPTION PHENOTYPE</scope>
    <scope>MUTAGENESIS OF GLN-66</scope>
</reference>
<reference evidence="13" key="11">
    <citation type="journal article" date="2011" name="Genes Dev.">
        <title>Crystal structure of the Gtr1p-Gtr2p complex reveals new insights into the amino acid-induced TORC1 activation.</title>
        <authorList>
            <person name="Gong R."/>
            <person name="Li L."/>
            <person name="Liu Y."/>
            <person name="Wang P."/>
            <person name="Yang H."/>
            <person name="Wang L."/>
            <person name="Cheng J."/>
            <person name="Guan K.L."/>
            <person name="Xu Y."/>
        </authorList>
    </citation>
    <scope>X-RAY CRYSTALLOGRAPHY (2.77 ANGSTROMS) OF 11-341 IN COMPLEX WITH GTP AND GTR1</scope>
    <scope>INTERACTION WITH GTR1</scope>
</reference>
<reference evidence="12" key="12">
    <citation type="journal article" date="2017" name="J. Cell Sci.">
        <title>Pib2 and the EGO complex are both required for activation of TORC1.</title>
        <authorList>
            <person name="Varlakhanova N.V."/>
            <person name="Mihalevic M.J."/>
            <person name="Bernstein K.A."/>
            <person name="Ford M.G.J."/>
        </authorList>
    </citation>
    <scope>FUNCTION</scope>
    <scope>SUBCELLULAR LOCATION</scope>
    <scope>DISRUPTION PHENOTYPE</scope>
    <source>
        <strain evidence="10">ATCC 200060 / W303</strain>
    </source>
</reference>
<gene>
    <name evidence="11" type="primary">GTR2</name>
    <name type="ordered locus">YGR163W</name>
</gene>
<dbReference type="EC" id="3.6.5.-" evidence="1"/>
<dbReference type="EMBL" id="AB015239">
    <property type="protein sequence ID" value="BAA28781.1"/>
    <property type="molecule type" value="Genomic_DNA"/>
</dbReference>
<dbReference type="EMBL" id="Z72948">
    <property type="protein sequence ID" value="CAA97187.1"/>
    <property type="molecule type" value="Genomic_DNA"/>
</dbReference>
<dbReference type="EMBL" id="BK006941">
    <property type="protein sequence ID" value="DAA08258.1"/>
    <property type="molecule type" value="Genomic_DNA"/>
</dbReference>
<dbReference type="PIR" id="S64474">
    <property type="entry name" value="S64474"/>
</dbReference>
<dbReference type="RefSeq" id="NP_011679.3">
    <property type="nucleotide sequence ID" value="NM_001181292.3"/>
</dbReference>
<dbReference type="PDB" id="3R7W">
    <property type="method" value="X-ray"/>
    <property type="resolution" value="2.77 A"/>
    <property type="chains" value="B/D=11-341"/>
</dbReference>
<dbReference type="PDB" id="4ARZ">
    <property type="method" value="X-ray"/>
    <property type="resolution" value="3.10 A"/>
    <property type="chains" value="B=1-341"/>
</dbReference>
<dbReference type="PDB" id="6JWP">
    <property type="method" value="X-ray"/>
    <property type="resolution" value="3.20 A"/>
    <property type="chains" value="B/G=1-341"/>
</dbReference>
<dbReference type="PDBsum" id="3R7W"/>
<dbReference type="PDBsum" id="4ARZ"/>
<dbReference type="PDBsum" id="6JWP"/>
<dbReference type="SMR" id="P53290"/>
<dbReference type="BioGRID" id="33415">
    <property type="interactions" value="236"/>
</dbReference>
<dbReference type="ComplexPortal" id="CPX-3172">
    <property type="entry name" value="EGO complex"/>
</dbReference>
<dbReference type="ComplexPortal" id="CPX-3233">
    <property type="entry name" value="GSE complex"/>
</dbReference>
<dbReference type="DIP" id="DIP-4521N"/>
<dbReference type="FunCoup" id="P53290">
    <property type="interactions" value="678"/>
</dbReference>
<dbReference type="IntAct" id="P53290">
    <property type="interactions" value="35"/>
</dbReference>
<dbReference type="MINT" id="P53290"/>
<dbReference type="STRING" id="4932.YGR163W"/>
<dbReference type="iPTMnet" id="P53290"/>
<dbReference type="PaxDb" id="4932-YGR163W"/>
<dbReference type="PeptideAtlas" id="P53290"/>
<dbReference type="EnsemblFungi" id="YGR163W_mRNA">
    <property type="protein sequence ID" value="YGR163W"/>
    <property type="gene ID" value="YGR163W"/>
</dbReference>
<dbReference type="GeneID" id="853072"/>
<dbReference type="KEGG" id="sce:YGR163W"/>
<dbReference type="AGR" id="SGD:S000003395"/>
<dbReference type="SGD" id="S000003395">
    <property type="gene designation" value="GTR2"/>
</dbReference>
<dbReference type="VEuPathDB" id="FungiDB:YGR163W"/>
<dbReference type="eggNOG" id="KOG3887">
    <property type="taxonomic scope" value="Eukaryota"/>
</dbReference>
<dbReference type="GeneTree" id="ENSGT00950000183031"/>
<dbReference type="HOGENOM" id="CLU_047421_2_0_1"/>
<dbReference type="InParanoid" id="P53290"/>
<dbReference type="OMA" id="NCRTFQE"/>
<dbReference type="OrthoDB" id="26136at2759"/>
<dbReference type="BioCyc" id="YEAST:G3O-30862-MONOMER"/>
<dbReference type="Reactome" id="R-SCE-165159">
    <property type="pathway name" value="MTOR signalling"/>
</dbReference>
<dbReference type="Reactome" id="R-SCE-9639288">
    <property type="pathway name" value="Amino acids regulate mTORC1"/>
</dbReference>
<dbReference type="BioGRID-ORCS" id="853072">
    <property type="hits" value="6 hits in 10 CRISPR screens"/>
</dbReference>
<dbReference type="EvolutionaryTrace" id="P53290"/>
<dbReference type="PRO" id="PR:P53290"/>
<dbReference type="Proteomes" id="UP000002311">
    <property type="component" value="Chromosome VII"/>
</dbReference>
<dbReference type="RNAct" id="P53290">
    <property type="molecule type" value="protein"/>
</dbReference>
<dbReference type="GO" id="GO:0000785">
    <property type="term" value="C:chromatin"/>
    <property type="evidence" value="ECO:0000314"/>
    <property type="project" value="SGD"/>
</dbReference>
<dbReference type="GO" id="GO:0005737">
    <property type="term" value="C:cytoplasm"/>
    <property type="evidence" value="ECO:0000314"/>
    <property type="project" value="SGD"/>
</dbReference>
<dbReference type="GO" id="GO:0000329">
    <property type="term" value="C:fungal-type vacuole membrane"/>
    <property type="evidence" value="ECO:0000314"/>
    <property type="project" value="SGD"/>
</dbReference>
<dbReference type="GO" id="GO:1990131">
    <property type="term" value="C:Gtr1-Gtr2 GTPase complex"/>
    <property type="evidence" value="ECO:0000353"/>
    <property type="project" value="SGD"/>
</dbReference>
<dbReference type="GO" id="GO:0005770">
    <property type="term" value="C:late endosome"/>
    <property type="evidence" value="ECO:0000314"/>
    <property type="project" value="ComplexPortal"/>
</dbReference>
<dbReference type="GO" id="GO:0031902">
    <property type="term" value="C:late endosome membrane"/>
    <property type="evidence" value="ECO:0000314"/>
    <property type="project" value="SGD"/>
</dbReference>
<dbReference type="GO" id="GO:0045121">
    <property type="term" value="C:membrane raft"/>
    <property type="evidence" value="ECO:0000314"/>
    <property type="project" value="SGD"/>
</dbReference>
<dbReference type="GO" id="GO:0005634">
    <property type="term" value="C:nucleus"/>
    <property type="evidence" value="ECO:0000314"/>
    <property type="project" value="SGD"/>
</dbReference>
<dbReference type="GO" id="GO:0071986">
    <property type="term" value="C:Ragulator complex"/>
    <property type="evidence" value="ECO:0000314"/>
    <property type="project" value="SGD"/>
</dbReference>
<dbReference type="GO" id="GO:0005525">
    <property type="term" value="F:GTP binding"/>
    <property type="evidence" value="ECO:0007669"/>
    <property type="project" value="UniProtKB-KW"/>
</dbReference>
<dbReference type="GO" id="GO:0003924">
    <property type="term" value="F:GTPase activity"/>
    <property type="evidence" value="ECO:0000314"/>
    <property type="project" value="SGD"/>
</dbReference>
<dbReference type="GO" id="GO:0071230">
    <property type="term" value="P:cellular response to amino acid stimulus"/>
    <property type="evidence" value="ECO:0000315"/>
    <property type="project" value="SGD"/>
</dbReference>
<dbReference type="GO" id="GO:0006995">
    <property type="term" value="P:cellular response to nitrogen starvation"/>
    <property type="evidence" value="ECO:0000316"/>
    <property type="project" value="SGD"/>
</dbReference>
<dbReference type="GO" id="GO:0034599">
    <property type="term" value="P:cellular response to oxidative stress"/>
    <property type="evidence" value="ECO:0000315"/>
    <property type="project" value="SGD"/>
</dbReference>
<dbReference type="GO" id="GO:0009267">
    <property type="term" value="P:cellular response to starvation"/>
    <property type="evidence" value="ECO:0000318"/>
    <property type="project" value="GO_Central"/>
</dbReference>
<dbReference type="GO" id="GO:0032456">
    <property type="term" value="P:endocytic recycling"/>
    <property type="evidence" value="ECO:0000314"/>
    <property type="project" value="ComplexPortal"/>
</dbReference>
<dbReference type="GO" id="GO:0016237">
    <property type="term" value="P:microautophagy"/>
    <property type="evidence" value="ECO:0000315"/>
    <property type="project" value="SGD"/>
</dbReference>
<dbReference type="GO" id="GO:0010507">
    <property type="term" value="P:negative regulation of autophagy"/>
    <property type="evidence" value="ECO:0000316"/>
    <property type="project" value="SGD"/>
</dbReference>
<dbReference type="GO" id="GO:0032008">
    <property type="term" value="P:positive regulation of TOR signaling"/>
    <property type="evidence" value="ECO:0000303"/>
    <property type="project" value="ComplexPortal"/>
</dbReference>
<dbReference type="GO" id="GO:1904263">
    <property type="term" value="P:positive regulation of TORC1 signaling"/>
    <property type="evidence" value="ECO:0000315"/>
    <property type="project" value="SGD"/>
</dbReference>
<dbReference type="GO" id="GO:0045944">
    <property type="term" value="P:positive regulation of transcription by RNA polymerase II"/>
    <property type="evidence" value="ECO:0000314"/>
    <property type="project" value="SGD"/>
</dbReference>
<dbReference type="GO" id="GO:1903778">
    <property type="term" value="P:protein localization to vacuolar membrane"/>
    <property type="evidence" value="ECO:0000315"/>
    <property type="project" value="SGD"/>
</dbReference>
<dbReference type="CDD" id="cd11385">
    <property type="entry name" value="RagC_like"/>
    <property type="match status" value="1"/>
</dbReference>
<dbReference type="FunFam" id="3.30.450.190:FF:000008">
    <property type="entry name" value="GTP-binding protein GTR2"/>
    <property type="match status" value="1"/>
</dbReference>
<dbReference type="FunFam" id="3.40.50.300:FF:001086">
    <property type="entry name" value="GTP-binding protein GTR2"/>
    <property type="match status" value="1"/>
</dbReference>
<dbReference type="Gene3D" id="3.30.450.190">
    <property type="match status" value="1"/>
</dbReference>
<dbReference type="Gene3D" id="3.40.50.300">
    <property type="entry name" value="P-loop containing nucleotide triphosphate hydrolases"/>
    <property type="match status" value="1"/>
</dbReference>
<dbReference type="InterPro" id="IPR006762">
    <property type="entry name" value="Gtr1_RagA"/>
</dbReference>
<dbReference type="InterPro" id="IPR027417">
    <property type="entry name" value="P-loop_NTPase"/>
</dbReference>
<dbReference type="InterPro" id="IPR039400">
    <property type="entry name" value="RagC/D"/>
</dbReference>
<dbReference type="PANTHER" id="PTHR11259:SF2">
    <property type="entry name" value="GH16429P"/>
    <property type="match status" value="1"/>
</dbReference>
<dbReference type="PANTHER" id="PTHR11259">
    <property type="entry name" value="RAS-RELATED GTP BINDING RAG/GTR YEAST"/>
    <property type="match status" value="1"/>
</dbReference>
<dbReference type="Pfam" id="PF04670">
    <property type="entry name" value="Gtr1_RagA"/>
    <property type="match status" value="1"/>
</dbReference>
<dbReference type="SUPFAM" id="SSF52540">
    <property type="entry name" value="P-loop containing nucleoside triphosphate hydrolases"/>
    <property type="match status" value="1"/>
</dbReference>
<keyword id="KW-0002">3D-structure</keyword>
<keyword id="KW-0342">GTP-binding</keyword>
<keyword id="KW-0378">Hydrolase</keyword>
<keyword id="KW-0472">Membrane</keyword>
<keyword id="KW-0547">Nucleotide-binding</keyword>
<keyword id="KW-1185">Reference proteome</keyword>
<keyword id="KW-0926">Vacuole</keyword>
<name>RAGCD_YEAST</name>
<organism>
    <name type="scientific">Saccharomyces cerevisiae (strain ATCC 204508 / S288c)</name>
    <name type="common">Baker's yeast</name>
    <dbReference type="NCBI Taxonomy" id="559292"/>
    <lineage>
        <taxon>Eukaryota</taxon>
        <taxon>Fungi</taxon>
        <taxon>Dikarya</taxon>
        <taxon>Ascomycota</taxon>
        <taxon>Saccharomycotina</taxon>
        <taxon>Saccharomycetes</taxon>
        <taxon>Saccharomycetales</taxon>
        <taxon>Saccharomycetaceae</taxon>
        <taxon>Saccharomyces</taxon>
    </lineage>
</organism>